<dbReference type="EC" id="3.6.5.2" evidence="2"/>
<dbReference type="EMBL" id="U15594">
    <property type="protein sequence ID" value="AAC47511.1"/>
    <property type="molecule type" value="mRNA"/>
</dbReference>
<dbReference type="EMBL" id="AF000653">
    <property type="protein sequence ID" value="AAB58345.1"/>
    <property type="molecule type" value="Genomic_DNA"/>
</dbReference>
<dbReference type="PIR" id="S65761">
    <property type="entry name" value="S65761"/>
</dbReference>
<dbReference type="SMR" id="Q94694"/>
<dbReference type="GO" id="GO:0005886">
    <property type="term" value="C:plasma membrane"/>
    <property type="evidence" value="ECO:0007669"/>
    <property type="project" value="UniProtKB-SubCell"/>
</dbReference>
<dbReference type="GO" id="GO:0003925">
    <property type="term" value="F:G protein activity"/>
    <property type="evidence" value="ECO:0007669"/>
    <property type="project" value="UniProtKB-EC"/>
</dbReference>
<dbReference type="GO" id="GO:0005525">
    <property type="term" value="F:GTP binding"/>
    <property type="evidence" value="ECO:0007669"/>
    <property type="project" value="UniProtKB-KW"/>
</dbReference>
<dbReference type="GO" id="GO:0032486">
    <property type="term" value="P:Rap protein signal transduction"/>
    <property type="evidence" value="ECO:0007669"/>
    <property type="project" value="InterPro"/>
</dbReference>
<dbReference type="CDD" id="cd04175">
    <property type="entry name" value="Rap1"/>
    <property type="match status" value="1"/>
</dbReference>
<dbReference type="FunFam" id="3.40.50.300:FF:000182">
    <property type="entry name" value="ras-related protein Rap-1b"/>
    <property type="match status" value="1"/>
</dbReference>
<dbReference type="Gene3D" id="3.40.50.300">
    <property type="entry name" value="P-loop containing nucleotide triphosphate hydrolases"/>
    <property type="match status" value="1"/>
</dbReference>
<dbReference type="InterPro" id="IPR027417">
    <property type="entry name" value="P-loop_NTPase"/>
</dbReference>
<dbReference type="InterPro" id="IPR038851">
    <property type="entry name" value="Rap1"/>
</dbReference>
<dbReference type="InterPro" id="IPR005225">
    <property type="entry name" value="Small_GTP-bd"/>
</dbReference>
<dbReference type="InterPro" id="IPR001806">
    <property type="entry name" value="Small_GTPase"/>
</dbReference>
<dbReference type="InterPro" id="IPR020849">
    <property type="entry name" value="Small_GTPase_Ras-type"/>
</dbReference>
<dbReference type="NCBIfam" id="TIGR00231">
    <property type="entry name" value="small_GTP"/>
    <property type="match status" value="1"/>
</dbReference>
<dbReference type="PANTHER" id="PTHR24070">
    <property type="entry name" value="RAS, DI-RAS, AND RHEB FAMILY MEMBERS OF SMALL GTPASE SUPERFAMILY"/>
    <property type="match status" value="1"/>
</dbReference>
<dbReference type="Pfam" id="PF00071">
    <property type="entry name" value="Ras"/>
    <property type="match status" value="1"/>
</dbReference>
<dbReference type="PRINTS" id="PR00449">
    <property type="entry name" value="RASTRNSFRMNG"/>
</dbReference>
<dbReference type="SMART" id="SM00175">
    <property type="entry name" value="RAB"/>
    <property type="match status" value="1"/>
</dbReference>
<dbReference type="SMART" id="SM00176">
    <property type="entry name" value="RAN"/>
    <property type="match status" value="1"/>
</dbReference>
<dbReference type="SMART" id="SM00173">
    <property type="entry name" value="RAS"/>
    <property type="match status" value="1"/>
</dbReference>
<dbReference type="SMART" id="SM00174">
    <property type="entry name" value="RHO"/>
    <property type="match status" value="1"/>
</dbReference>
<dbReference type="SUPFAM" id="SSF52540">
    <property type="entry name" value="P-loop containing nucleoside triphosphate hydrolases"/>
    <property type="match status" value="1"/>
</dbReference>
<dbReference type="PROSITE" id="PS51421">
    <property type="entry name" value="RAS"/>
    <property type="match status" value="1"/>
</dbReference>
<accession>Q94694</accession>
<reference key="1">
    <citation type="journal article" date="1996" name="Biochim. Biophys. Acta">
        <title>Identification and sequence analysis of a rap gene from the true slime mold Physarum polycephalum.</title>
        <authorList>
            <person name="Kozlowski P."/>
            <person name="Trzcinska-Danielewicz J."/>
            <person name="Toczko K."/>
        </authorList>
    </citation>
    <scope>NUCLEOTIDE SEQUENCE [MRNA]</scope>
    <source>
        <strain>LU352</strain>
    </source>
</reference>
<reference key="2">
    <citation type="journal article" date="1997" name="Cell Biol. Int.">
        <title>Ppras1, ppras2 and pprap1 genes, members of a ras gene family from the true slime mold Physarum polycephalum are developmentally regulated.</title>
        <authorList>
            <person name="Kozlowski P."/>
            <person name="Trzcinska-Danielewicz J."/>
            <person name="Urbanczyk A."/>
            <person name="Toczko K."/>
        </authorList>
    </citation>
    <scope>DEVELOPMENTAL STAGE</scope>
    <source>
        <strain>CL</strain>
        <strain>LU352</strain>
        <strain>MCC</strain>
    </source>
</reference>
<keyword id="KW-1003">Cell membrane</keyword>
<keyword id="KW-0342">GTP-binding</keyword>
<keyword id="KW-0378">Hydrolase</keyword>
<keyword id="KW-0449">Lipoprotein</keyword>
<keyword id="KW-0472">Membrane</keyword>
<keyword id="KW-0488">Methylation</keyword>
<keyword id="KW-0547">Nucleotide-binding</keyword>
<keyword id="KW-0636">Prenylation</keyword>
<organism>
    <name type="scientific">Physarum polycephalum</name>
    <name type="common">Slime mold</name>
    <dbReference type="NCBI Taxonomy" id="5791"/>
    <lineage>
        <taxon>Eukaryota</taxon>
        <taxon>Amoebozoa</taxon>
        <taxon>Evosea</taxon>
        <taxon>Eumycetozoa</taxon>
        <taxon>Myxogastria</taxon>
        <taxon>Myxogastromycetidae</taxon>
        <taxon>Physariida</taxon>
        <taxon>Physaraceae</taxon>
        <taxon>Physarum</taxon>
    </lineage>
</organism>
<comment type="catalytic activity">
    <reaction evidence="2">
        <text>GTP + H2O = GDP + phosphate + H(+)</text>
        <dbReference type="Rhea" id="RHEA:19669"/>
        <dbReference type="ChEBI" id="CHEBI:15377"/>
        <dbReference type="ChEBI" id="CHEBI:15378"/>
        <dbReference type="ChEBI" id="CHEBI:37565"/>
        <dbReference type="ChEBI" id="CHEBI:43474"/>
        <dbReference type="ChEBI" id="CHEBI:58189"/>
        <dbReference type="EC" id="3.6.5.2"/>
    </reaction>
</comment>
<comment type="subcellular location">
    <subcellularLocation>
        <location evidence="4">Cell membrane</location>
        <topology evidence="4">Lipid-anchor</topology>
        <orientation evidence="4">Cytoplasmic side</orientation>
    </subcellularLocation>
</comment>
<comment type="developmental stage">
    <text evidence="3">Highest levels in fruiting bodies, abundant in amoebae, moderately abundant in CL spherules but barely present in plasmodia and MCC spherules.</text>
</comment>
<comment type="similarity">
    <text evidence="4">Belongs to the small GTPase superfamily. Ras family.</text>
</comment>
<sequence>MPLREFKIVVLGSGGVGKSALTVQFVQGIFVEKYDPTIEDSYRKQVEVDGQQCMLEILDTAGTEQFTAMRDLYMKNGQGFVLVYSIIAMSTFNDLPDLREQILRVKDCDDVPMVLVGNKCDLAEQRVISTEQGDELARKFGGCAFLEASAKNKINVEQIFYDLIRQINRKNPGPTNKKEKKSGGCILL</sequence>
<evidence type="ECO:0000250" key="1"/>
<evidence type="ECO:0000250" key="2">
    <source>
        <dbReference type="UniProtKB" id="P61224"/>
    </source>
</evidence>
<evidence type="ECO:0000269" key="3">
    <source>
    </source>
</evidence>
<evidence type="ECO:0000305" key="4"/>
<feature type="chain" id="PRO_0000082685" description="Ras-related protein Rap-1">
    <location>
        <begin position="1"/>
        <end position="185"/>
    </location>
</feature>
<feature type="propeptide" id="PRO_0000281334" description="Removed in mature form" evidence="1">
    <location>
        <begin position="186"/>
        <end position="188"/>
    </location>
</feature>
<feature type="short sequence motif" description="Effector region">
    <location>
        <begin position="34"/>
        <end position="42"/>
    </location>
</feature>
<feature type="binding site" evidence="1">
    <location>
        <begin position="12"/>
        <end position="19"/>
    </location>
    <ligand>
        <name>GTP</name>
        <dbReference type="ChEBI" id="CHEBI:37565"/>
    </ligand>
</feature>
<feature type="binding site" evidence="1">
    <location>
        <begin position="59"/>
        <end position="63"/>
    </location>
    <ligand>
        <name>GTP</name>
        <dbReference type="ChEBI" id="CHEBI:37565"/>
    </ligand>
</feature>
<feature type="binding site" evidence="1">
    <location>
        <begin position="118"/>
        <end position="121"/>
    </location>
    <ligand>
        <name>GTP</name>
        <dbReference type="ChEBI" id="CHEBI:37565"/>
    </ligand>
</feature>
<feature type="modified residue" description="Cysteine methyl ester" evidence="1">
    <location>
        <position position="185"/>
    </location>
</feature>
<feature type="lipid moiety-binding region" description="S-geranylgeranyl cysteine" evidence="1">
    <location>
        <position position="185"/>
    </location>
</feature>
<protein>
    <recommendedName>
        <fullName>Ras-related protein Rap-1</fullName>
        <ecNumber evidence="2">3.6.5.2</ecNumber>
    </recommendedName>
    <alternativeName>
        <fullName>Pprap1</fullName>
    </alternativeName>
</protein>
<gene>
    <name type="primary">RAP1</name>
</gene>
<proteinExistence type="evidence at transcript level"/>
<name>RAP1_PHYPO</name>